<keyword id="KW-0285">Flavoprotein</keyword>
<keyword id="KW-0288">FMN</keyword>
<keyword id="KW-0503">Monooxygenase</keyword>
<keyword id="KW-0560">Oxidoreductase</keyword>
<dbReference type="EC" id="1.14.14.5" evidence="1"/>
<dbReference type="EMBL" id="CP000560">
    <property type="protein sequence ID" value="ABS73279.1"/>
    <property type="molecule type" value="Genomic_DNA"/>
</dbReference>
<dbReference type="RefSeq" id="WP_012117137.1">
    <property type="nucleotide sequence ID" value="NC_009725.2"/>
</dbReference>
<dbReference type="SMR" id="A7Z2Q3"/>
<dbReference type="GeneID" id="93080048"/>
<dbReference type="KEGG" id="bay:RBAM_009140"/>
<dbReference type="HOGENOM" id="CLU_027853_1_0_9"/>
<dbReference type="Proteomes" id="UP000001120">
    <property type="component" value="Chromosome"/>
</dbReference>
<dbReference type="GO" id="GO:0008726">
    <property type="term" value="F:alkanesulfonate monooxygenase activity"/>
    <property type="evidence" value="ECO:0007669"/>
    <property type="project" value="UniProtKB-UniRule"/>
</dbReference>
<dbReference type="GO" id="GO:0046306">
    <property type="term" value="P:alkanesulfonate catabolic process"/>
    <property type="evidence" value="ECO:0007669"/>
    <property type="project" value="TreeGrafter"/>
</dbReference>
<dbReference type="CDD" id="cd01094">
    <property type="entry name" value="Alkanesulfonate_monoxygenase"/>
    <property type="match status" value="1"/>
</dbReference>
<dbReference type="Gene3D" id="3.20.20.30">
    <property type="entry name" value="Luciferase-like domain"/>
    <property type="match status" value="1"/>
</dbReference>
<dbReference type="HAMAP" id="MF_01229">
    <property type="entry name" value="Alkanesulf_monooxygen"/>
    <property type="match status" value="1"/>
</dbReference>
<dbReference type="InterPro" id="IPR019911">
    <property type="entry name" value="Alkanesulphonate_mOase_FMN-dep"/>
</dbReference>
<dbReference type="InterPro" id="IPR011251">
    <property type="entry name" value="Luciferase-like_dom"/>
</dbReference>
<dbReference type="InterPro" id="IPR036661">
    <property type="entry name" value="Luciferase-like_sf"/>
</dbReference>
<dbReference type="InterPro" id="IPR050172">
    <property type="entry name" value="SsuD_RutA_monooxygenase"/>
</dbReference>
<dbReference type="NCBIfam" id="TIGR03565">
    <property type="entry name" value="alk_sulf_monoox"/>
    <property type="match status" value="1"/>
</dbReference>
<dbReference type="NCBIfam" id="NF001939">
    <property type="entry name" value="PRK00719.1"/>
    <property type="match status" value="1"/>
</dbReference>
<dbReference type="PANTHER" id="PTHR42847">
    <property type="entry name" value="ALKANESULFONATE MONOOXYGENASE"/>
    <property type="match status" value="1"/>
</dbReference>
<dbReference type="PANTHER" id="PTHR42847:SF4">
    <property type="entry name" value="ALKANESULFONATE MONOOXYGENASE-RELATED"/>
    <property type="match status" value="1"/>
</dbReference>
<dbReference type="Pfam" id="PF00296">
    <property type="entry name" value="Bac_luciferase"/>
    <property type="match status" value="1"/>
</dbReference>
<dbReference type="SUPFAM" id="SSF51679">
    <property type="entry name" value="Bacterial luciferase-like"/>
    <property type="match status" value="1"/>
</dbReference>
<proteinExistence type="inferred from homology"/>
<organism>
    <name type="scientific">Bacillus velezensis (strain DSM 23117 / BGSC 10A6 / LMG 26770 / FZB42)</name>
    <name type="common">Bacillus amyloliquefaciens subsp. plantarum</name>
    <dbReference type="NCBI Taxonomy" id="326423"/>
    <lineage>
        <taxon>Bacteria</taxon>
        <taxon>Bacillati</taxon>
        <taxon>Bacillota</taxon>
        <taxon>Bacilli</taxon>
        <taxon>Bacillales</taxon>
        <taxon>Bacillaceae</taxon>
        <taxon>Bacillus</taxon>
        <taxon>Bacillus amyloliquefaciens group</taxon>
    </lineage>
</organism>
<sequence length="378" mass="41734">MEILWFIPTHGDGRYLGTQTGGRTADHLYFKQVAQAADRLGYTGVLLPTGRSCEDPWLTAAALAGETSDLKFLVAVRPGLMQPSVAARMASTMDRLSDGRLLVNVVAGGDPYELAGDGMFISHDERYKATEEFLTVWRGLMRGETVTYEGDHIKVENSNLLFPPKQSPHPPLYFGGSSQAGIEAAAKHTDVYLTWGEPPEQVKEKIETVKKQAAKEGRTMRFGIRLHVIVRETEEEAWEAAERLISHLDEETIAKAQAALRRADSSGQKRMAGLHNGDRSKLEISPNLWAGIGLVRGGAGTALVGDPQTVATRILEYQALGIESFIFSGYPHLEEAYYLAELVFPLLPFQNERTKKLERRLGEAMGNDHFARGKKAKV</sequence>
<evidence type="ECO:0000255" key="1">
    <source>
        <dbReference type="HAMAP-Rule" id="MF_01229"/>
    </source>
</evidence>
<feature type="chain" id="PRO_1000066816" description="Alkanesulfonate monooxygenase">
    <location>
        <begin position="1"/>
        <end position="378"/>
    </location>
</feature>
<comment type="function">
    <text evidence="1">Catalyzes the desulfonation of aliphatic sulfonates.</text>
</comment>
<comment type="catalytic activity">
    <reaction evidence="1">
        <text>an alkanesulfonate + FMNH2 + O2 = an aldehyde + FMN + sulfite + H2O + 2 H(+)</text>
        <dbReference type="Rhea" id="RHEA:23064"/>
        <dbReference type="ChEBI" id="CHEBI:15377"/>
        <dbReference type="ChEBI" id="CHEBI:15378"/>
        <dbReference type="ChEBI" id="CHEBI:15379"/>
        <dbReference type="ChEBI" id="CHEBI:17359"/>
        <dbReference type="ChEBI" id="CHEBI:17478"/>
        <dbReference type="ChEBI" id="CHEBI:57618"/>
        <dbReference type="ChEBI" id="CHEBI:58210"/>
        <dbReference type="ChEBI" id="CHEBI:134249"/>
        <dbReference type="EC" id="1.14.14.5"/>
    </reaction>
</comment>
<comment type="similarity">
    <text evidence="1">Belongs to the SsuD family.</text>
</comment>
<reference key="1">
    <citation type="journal article" date="2007" name="Nat. Biotechnol.">
        <title>Comparative analysis of the complete genome sequence of the plant growth-promoting bacterium Bacillus amyloliquefaciens FZB42.</title>
        <authorList>
            <person name="Chen X.H."/>
            <person name="Koumoutsi A."/>
            <person name="Scholz R."/>
            <person name="Eisenreich A."/>
            <person name="Schneider K."/>
            <person name="Heinemeyer I."/>
            <person name="Morgenstern B."/>
            <person name="Voss B."/>
            <person name="Hess W.R."/>
            <person name="Reva O."/>
            <person name="Junge H."/>
            <person name="Voigt B."/>
            <person name="Jungblut P.R."/>
            <person name="Vater J."/>
            <person name="Suessmuth R."/>
            <person name="Liesegang H."/>
            <person name="Strittmatter A."/>
            <person name="Gottschalk G."/>
            <person name="Borriss R."/>
        </authorList>
    </citation>
    <scope>NUCLEOTIDE SEQUENCE [LARGE SCALE GENOMIC DNA]</scope>
    <source>
        <strain>DSM 23117 / BGSC 10A6 / LMG 26770 / FZB42</strain>
    </source>
</reference>
<name>SSUD_BACVZ</name>
<accession>A7Z2Q3</accession>
<protein>
    <recommendedName>
        <fullName evidence="1">Alkanesulfonate monooxygenase</fullName>
        <ecNumber evidence="1">1.14.14.5</ecNumber>
    </recommendedName>
    <alternativeName>
        <fullName evidence="1">FMNH2-dependent aliphatic sulfonate monooxygenase</fullName>
    </alternativeName>
</protein>
<gene>
    <name evidence="1" type="primary">ssuD</name>
    <name type="ordered locus">RBAM_009140</name>
</gene>